<reference key="1">
    <citation type="journal article" date="2004" name="J. Bacteriol.">
        <title>Complete genome sequence of the genetically tractable hydrogenotrophic methanogen Methanococcus maripaludis.</title>
        <authorList>
            <person name="Hendrickson E.L."/>
            <person name="Kaul R."/>
            <person name="Zhou Y."/>
            <person name="Bovee D."/>
            <person name="Chapman P."/>
            <person name="Chung J."/>
            <person name="Conway de Macario E."/>
            <person name="Dodsworth J.A."/>
            <person name="Gillett W."/>
            <person name="Graham D.E."/>
            <person name="Hackett M."/>
            <person name="Haydock A.K."/>
            <person name="Kang A."/>
            <person name="Land M.L."/>
            <person name="Levy R."/>
            <person name="Lie T.J."/>
            <person name="Major T.A."/>
            <person name="Moore B.C."/>
            <person name="Porat I."/>
            <person name="Palmeiri A."/>
            <person name="Rouse G."/>
            <person name="Saenphimmachak C."/>
            <person name="Soell D."/>
            <person name="Van Dien S."/>
            <person name="Wang T."/>
            <person name="Whitman W.B."/>
            <person name="Xia Q."/>
            <person name="Zhang Y."/>
            <person name="Larimer F.W."/>
            <person name="Olson M.V."/>
            <person name="Leigh J.A."/>
        </authorList>
    </citation>
    <scope>NUCLEOTIDE SEQUENCE [LARGE SCALE GENOMIC DNA]</scope>
    <source>
        <strain>DSM 14266 / JCM 13030 / NBRC 101832 / S2 / LL</strain>
    </source>
</reference>
<accession>Q6LXL7</accession>
<name>AROC_METMP</name>
<proteinExistence type="inferred from homology"/>
<dbReference type="EC" id="4.2.3.5" evidence="1"/>
<dbReference type="EMBL" id="BX950229">
    <property type="protein sequence ID" value="CAF30889.1"/>
    <property type="molecule type" value="Genomic_DNA"/>
</dbReference>
<dbReference type="RefSeq" id="WP_011171277.1">
    <property type="nucleotide sequence ID" value="NC_005791.1"/>
</dbReference>
<dbReference type="SMR" id="Q6LXL7"/>
<dbReference type="STRING" id="267377.MMP1333"/>
<dbReference type="EnsemblBacteria" id="CAF30889">
    <property type="protein sequence ID" value="CAF30889"/>
    <property type="gene ID" value="MMP1333"/>
</dbReference>
<dbReference type="GeneID" id="2761243"/>
<dbReference type="KEGG" id="mmp:MMP1333"/>
<dbReference type="PATRIC" id="fig|267377.15.peg.1368"/>
<dbReference type="eggNOG" id="arCOG04133">
    <property type="taxonomic scope" value="Archaea"/>
</dbReference>
<dbReference type="HOGENOM" id="CLU_034547_0_2_2"/>
<dbReference type="OrthoDB" id="33049at2157"/>
<dbReference type="UniPathway" id="UPA00053">
    <property type="reaction ID" value="UER00090"/>
</dbReference>
<dbReference type="Proteomes" id="UP000000590">
    <property type="component" value="Chromosome"/>
</dbReference>
<dbReference type="GO" id="GO:0005829">
    <property type="term" value="C:cytosol"/>
    <property type="evidence" value="ECO:0007669"/>
    <property type="project" value="TreeGrafter"/>
</dbReference>
<dbReference type="GO" id="GO:0004107">
    <property type="term" value="F:chorismate synthase activity"/>
    <property type="evidence" value="ECO:0007669"/>
    <property type="project" value="UniProtKB-UniRule"/>
</dbReference>
<dbReference type="GO" id="GO:0010181">
    <property type="term" value="F:FMN binding"/>
    <property type="evidence" value="ECO:0007669"/>
    <property type="project" value="TreeGrafter"/>
</dbReference>
<dbReference type="GO" id="GO:0008652">
    <property type="term" value="P:amino acid biosynthetic process"/>
    <property type="evidence" value="ECO:0007669"/>
    <property type="project" value="UniProtKB-KW"/>
</dbReference>
<dbReference type="GO" id="GO:0009073">
    <property type="term" value="P:aromatic amino acid family biosynthetic process"/>
    <property type="evidence" value="ECO:0007669"/>
    <property type="project" value="UniProtKB-KW"/>
</dbReference>
<dbReference type="GO" id="GO:0009423">
    <property type="term" value="P:chorismate biosynthetic process"/>
    <property type="evidence" value="ECO:0007669"/>
    <property type="project" value="UniProtKB-UniRule"/>
</dbReference>
<dbReference type="CDD" id="cd07304">
    <property type="entry name" value="Chorismate_synthase"/>
    <property type="match status" value="1"/>
</dbReference>
<dbReference type="Gene3D" id="3.60.150.10">
    <property type="entry name" value="Chorismate synthase AroC"/>
    <property type="match status" value="1"/>
</dbReference>
<dbReference type="HAMAP" id="MF_00300">
    <property type="entry name" value="Chorismate_synth"/>
    <property type="match status" value="1"/>
</dbReference>
<dbReference type="InterPro" id="IPR000453">
    <property type="entry name" value="Chorismate_synth"/>
</dbReference>
<dbReference type="InterPro" id="IPR035904">
    <property type="entry name" value="Chorismate_synth_AroC_sf"/>
</dbReference>
<dbReference type="InterPro" id="IPR020541">
    <property type="entry name" value="Chorismate_synthase_CS"/>
</dbReference>
<dbReference type="NCBIfam" id="TIGR00033">
    <property type="entry name" value="aroC"/>
    <property type="match status" value="1"/>
</dbReference>
<dbReference type="NCBIfam" id="NF003793">
    <property type="entry name" value="PRK05382.1"/>
    <property type="match status" value="1"/>
</dbReference>
<dbReference type="PANTHER" id="PTHR21085">
    <property type="entry name" value="CHORISMATE SYNTHASE"/>
    <property type="match status" value="1"/>
</dbReference>
<dbReference type="PANTHER" id="PTHR21085:SF0">
    <property type="entry name" value="CHORISMATE SYNTHASE"/>
    <property type="match status" value="1"/>
</dbReference>
<dbReference type="Pfam" id="PF01264">
    <property type="entry name" value="Chorismate_synt"/>
    <property type="match status" value="1"/>
</dbReference>
<dbReference type="PIRSF" id="PIRSF001456">
    <property type="entry name" value="Chorismate_synth"/>
    <property type="match status" value="1"/>
</dbReference>
<dbReference type="SUPFAM" id="SSF103263">
    <property type="entry name" value="Chorismate synthase, AroC"/>
    <property type="match status" value="1"/>
</dbReference>
<dbReference type="PROSITE" id="PS00787">
    <property type="entry name" value="CHORISMATE_SYNTHASE_1"/>
    <property type="match status" value="1"/>
</dbReference>
<dbReference type="PROSITE" id="PS00788">
    <property type="entry name" value="CHORISMATE_SYNTHASE_2"/>
    <property type="match status" value="1"/>
</dbReference>
<sequence>MNTFGDNFRVTTWGESHGKALGAVIDGCPANLPILEEDIQNELNRRRPGYSIFSTPRKEEDMLEILSGIFEGKTTGTPISGLVFNKGQKSKDYSKIKDTPRPGHADLNYFLKYGNYDYRGGGRSSGRTTIGNVIGGAVAKKLIEFTHNIKIIGYSTKIGKINGDFDYYKNPEFFESDSNIEKLFEKTENNPLRCPSKNSDEMKDYVLDAMDKKDSVGGIIEIIIKGIPQGVGNPVFNKLEGKLGSAFIGINAVKGFEIGRGFESSDLYGSEMNDEYYIDENSINEKTNNAGGIIGGISTGSPVVLRVSIKPTPSISKIQDSVNLISNENEKIEIGGRHDPIIVPRVIPVLESMAAITVADLMISGGYINPCRL</sequence>
<gene>
    <name evidence="1" type="primary">aroC</name>
    <name type="ordered locus">MMP1333</name>
</gene>
<evidence type="ECO:0000255" key="1">
    <source>
        <dbReference type="HAMAP-Rule" id="MF_00300"/>
    </source>
</evidence>
<keyword id="KW-0028">Amino-acid biosynthesis</keyword>
<keyword id="KW-0057">Aromatic amino acid biosynthesis</keyword>
<keyword id="KW-0274">FAD</keyword>
<keyword id="KW-0285">Flavoprotein</keyword>
<keyword id="KW-0288">FMN</keyword>
<keyword id="KW-0456">Lyase</keyword>
<keyword id="KW-0521">NADP</keyword>
<keyword id="KW-1185">Reference proteome</keyword>
<protein>
    <recommendedName>
        <fullName evidence="1">Chorismate synthase</fullName>
        <shortName evidence="1">CS</shortName>
        <ecNumber evidence="1">4.2.3.5</ecNumber>
    </recommendedName>
    <alternativeName>
        <fullName evidence="1">5-enolpyruvylshikimate-3-phosphate phospholyase</fullName>
    </alternativeName>
</protein>
<organism>
    <name type="scientific">Methanococcus maripaludis (strain DSM 14266 / JCM 13030 / NBRC 101832 / S2 / LL)</name>
    <dbReference type="NCBI Taxonomy" id="267377"/>
    <lineage>
        <taxon>Archaea</taxon>
        <taxon>Methanobacteriati</taxon>
        <taxon>Methanobacteriota</taxon>
        <taxon>Methanomada group</taxon>
        <taxon>Methanococci</taxon>
        <taxon>Methanococcales</taxon>
        <taxon>Methanococcaceae</taxon>
        <taxon>Methanococcus</taxon>
    </lineage>
</organism>
<feature type="chain" id="PRO_0000140611" description="Chorismate synthase">
    <location>
        <begin position="1"/>
        <end position="373"/>
    </location>
</feature>
<feature type="binding site" evidence="1">
    <location>
        <position position="46"/>
    </location>
    <ligand>
        <name>NADP(+)</name>
        <dbReference type="ChEBI" id="CHEBI:58349"/>
    </ligand>
</feature>
<feature type="binding site" evidence="1">
    <location>
        <begin position="123"/>
        <end position="125"/>
    </location>
    <ligand>
        <name>FMN</name>
        <dbReference type="ChEBI" id="CHEBI:58210"/>
    </ligand>
</feature>
<feature type="binding site" evidence="1">
    <location>
        <begin position="251"/>
        <end position="252"/>
    </location>
    <ligand>
        <name>FMN</name>
        <dbReference type="ChEBI" id="CHEBI:58210"/>
    </ligand>
</feature>
<feature type="binding site" evidence="1">
    <location>
        <position position="295"/>
    </location>
    <ligand>
        <name>FMN</name>
        <dbReference type="ChEBI" id="CHEBI:58210"/>
    </ligand>
</feature>
<feature type="binding site" evidence="1">
    <location>
        <begin position="310"/>
        <end position="314"/>
    </location>
    <ligand>
        <name>FMN</name>
        <dbReference type="ChEBI" id="CHEBI:58210"/>
    </ligand>
</feature>
<feature type="binding site" evidence="1">
    <location>
        <position position="337"/>
    </location>
    <ligand>
        <name>FMN</name>
        <dbReference type="ChEBI" id="CHEBI:58210"/>
    </ligand>
</feature>
<comment type="function">
    <text evidence="1">Catalyzes the anti-1,4-elimination of the C-3 phosphate and the C-6 proR hydrogen from 5-enolpyruvylshikimate-3-phosphate (EPSP) to yield chorismate, which is the branch point compound that serves as the starting substrate for the three terminal pathways of aromatic amino acid biosynthesis. This reaction introduces a second double bond into the aromatic ring system.</text>
</comment>
<comment type="catalytic activity">
    <reaction evidence="1">
        <text>5-O-(1-carboxyvinyl)-3-phosphoshikimate = chorismate + phosphate</text>
        <dbReference type="Rhea" id="RHEA:21020"/>
        <dbReference type="ChEBI" id="CHEBI:29748"/>
        <dbReference type="ChEBI" id="CHEBI:43474"/>
        <dbReference type="ChEBI" id="CHEBI:57701"/>
        <dbReference type="EC" id="4.2.3.5"/>
    </reaction>
</comment>
<comment type="cofactor">
    <cofactor evidence="1">
        <name>FMNH2</name>
        <dbReference type="ChEBI" id="CHEBI:57618"/>
    </cofactor>
    <text evidence="1">Reduced FMN (FMNH(2)).</text>
</comment>
<comment type="pathway">
    <text evidence="1">Metabolic intermediate biosynthesis; chorismate biosynthesis; chorismate from D-erythrose 4-phosphate and phosphoenolpyruvate: step 7/7.</text>
</comment>
<comment type="similarity">
    <text evidence="1">Belongs to the chorismate synthase family.</text>
</comment>